<comment type="function">
    <text evidence="1">May cause loosening and extension of plant cell walls by disrupting non-covalent bonding between cellulose microfibrils and matrix glucans. No enzymatic activity has been found. May be required for rapid internodal elongation in deepwater rice during submergence (By similarity).</text>
</comment>
<comment type="subcellular location">
    <subcellularLocation>
        <location evidence="1">Secreted</location>
        <location evidence="1">Cell wall</location>
    </subcellularLocation>
    <subcellularLocation>
        <location evidence="1">Membrane</location>
        <topology evidence="1">Peripheral membrane protein</topology>
    </subcellularLocation>
</comment>
<comment type="tissue specificity">
    <text evidence="5">Expressed in panicles and flowers.</text>
</comment>
<comment type="similarity">
    <text evidence="6">Belongs to the expansin family. Expansin A subfamily.</text>
</comment>
<comment type="online information" name="EXPANSIN homepage">
    <link uri="https://www.dept.psu.edu/biology/groups/expansins/index.htm"/>
</comment>
<accession>Q4PR41</accession>
<accession>Q7G6Z3</accession>
<accession>Q946H7</accession>
<keyword id="KW-0134">Cell wall</keyword>
<keyword id="KW-0961">Cell wall biogenesis/degradation</keyword>
<keyword id="KW-0472">Membrane</keyword>
<keyword id="KW-1185">Reference proteome</keyword>
<keyword id="KW-0964">Secreted</keyword>
<keyword id="KW-0732">Signal</keyword>
<gene>
    <name type="primary">EXPA25</name>
    <name type="synonym">EXP25</name>
    <name type="ordered locus">Os03g0155500</name>
    <name type="ordered locus">LOC_Os03g06010</name>
    <name type="ORF">OSJNBa0011L14.17</name>
</gene>
<reference key="1">
    <citation type="journal article" date="2002" name="Plant Physiol.">
        <title>Expression of alpha-expansin and expansin-like genes in deepwater rice.</title>
        <authorList>
            <person name="Lee Y."/>
            <person name="Kende H."/>
        </authorList>
    </citation>
    <scope>NUCLEOTIDE SEQUENCE [GENOMIC DNA]</scope>
</reference>
<reference key="2">
    <citation type="journal article" date="2005" name="Genome Res.">
        <title>Sequence, annotation, and analysis of synteny between rice chromosome 3 and diverged grass species.</title>
        <authorList>
            <consortium name="The rice chromosome 3 sequencing consortium"/>
            <person name="Buell C.R."/>
            <person name="Yuan Q."/>
            <person name="Ouyang S."/>
            <person name="Liu J."/>
            <person name="Zhu W."/>
            <person name="Wang A."/>
            <person name="Maiti R."/>
            <person name="Haas B."/>
            <person name="Wortman J."/>
            <person name="Pertea M."/>
            <person name="Jones K.M."/>
            <person name="Kim M."/>
            <person name="Overton L."/>
            <person name="Tsitrin T."/>
            <person name="Fadrosh D."/>
            <person name="Bera J."/>
            <person name="Weaver B."/>
            <person name="Jin S."/>
            <person name="Johri S."/>
            <person name="Reardon M."/>
            <person name="Webb K."/>
            <person name="Hill J."/>
            <person name="Moffat K."/>
            <person name="Tallon L."/>
            <person name="Van Aken S."/>
            <person name="Lewis M."/>
            <person name="Utterback T."/>
            <person name="Feldblyum T."/>
            <person name="Zismann V."/>
            <person name="Iobst S."/>
            <person name="Hsiao J."/>
            <person name="de Vazeille A.R."/>
            <person name="Salzberg S.L."/>
            <person name="White O."/>
            <person name="Fraser C.M."/>
            <person name="Yu Y."/>
            <person name="Kim H."/>
            <person name="Rambo T."/>
            <person name="Currie J."/>
            <person name="Collura K."/>
            <person name="Kernodle-Thompson S."/>
            <person name="Wei F."/>
            <person name="Kudrna K."/>
            <person name="Ammiraju J.S.S."/>
            <person name="Luo M."/>
            <person name="Goicoechea J.L."/>
            <person name="Wing R.A."/>
            <person name="Henry D."/>
            <person name="Oates R."/>
            <person name="Palmer M."/>
            <person name="Pries G."/>
            <person name="Saski C."/>
            <person name="Simmons J."/>
            <person name="Soderlund C."/>
            <person name="Nelson W."/>
            <person name="de la Bastide M."/>
            <person name="Spiegel L."/>
            <person name="Nascimento L."/>
            <person name="Huang E."/>
            <person name="Preston R."/>
            <person name="Zutavern T."/>
            <person name="Palmer L."/>
            <person name="O'Shaughnessy A."/>
            <person name="Dike S."/>
            <person name="McCombie W.R."/>
            <person name="Minx P."/>
            <person name="Cordum H."/>
            <person name="Wilson R."/>
            <person name="Jin W."/>
            <person name="Lee H.R."/>
            <person name="Jiang J."/>
            <person name="Jackson S."/>
        </authorList>
    </citation>
    <scope>NUCLEOTIDE SEQUENCE [LARGE SCALE GENOMIC DNA]</scope>
    <source>
        <strain>cv. Nipponbare</strain>
    </source>
</reference>
<reference key="3">
    <citation type="journal article" date="2005" name="Nature">
        <title>The map-based sequence of the rice genome.</title>
        <authorList>
            <consortium name="International rice genome sequencing project (IRGSP)"/>
        </authorList>
    </citation>
    <scope>NUCLEOTIDE SEQUENCE [LARGE SCALE GENOMIC DNA]</scope>
    <source>
        <strain>cv. Nipponbare</strain>
    </source>
</reference>
<reference key="4">
    <citation type="journal article" date="2013" name="Rice">
        <title>Improvement of the Oryza sativa Nipponbare reference genome using next generation sequence and optical map data.</title>
        <authorList>
            <person name="Kawahara Y."/>
            <person name="de la Bastide M."/>
            <person name="Hamilton J.P."/>
            <person name="Kanamori H."/>
            <person name="McCombie W.R."/>
            <person name="Ouyang S."/>
            <person name="Schwartz D.C."/>
            <person name="Tanaka T."/>
            <person name="Wu J."/>
            <person name="Zhou S."/>
            <person name="Childs K.L."/>
            <person name="Davidson R.M."/>
            <person name="Lin H."/>
            <person name="Quesada-Ocampo L."/>
            <person name="Vaillancourt B."/>
            <person name="Sakai H."/>
            <person name="Lee S.S."/>
            <person name="Kim J."/>
            <person name="Numa H."/>
            <person name="Itoh T."/>
            <person name="Buell C.R."/>
            <person name="Matsumoto T."/>
        </authorList>
    </citation>
    <scope>GENOME REANNOTATION</scope>
    <source>
        <strain>cv. Nipponbare</strain>
    </source>
</reference>
<reference key="5">
    <citation type="journal article" date="2005" name="Mol. Cells">
        <title>Characterization and transcriptional expression of the alpha-expansin gene family in rice.</title>
        <authorList>
            <person name="Shin J.-H."/>
            <person name="Jeong D.-H."/>
            <person name="Park M.C."/>
            <person name="An G."/>
        </authorList>
    </citation>
    <scope>NUCLEOTIDE SEQUENCE [MRNA] OF 14-255</scope>
    <scope>TISSUE SPECIFICITY</scope>
    <source>
        <strain>cv. Dongjin</strain>
    </source>
</reference>
<reference key="6">
    <citation type="journal article" date="2004" name="Plant Mol. Biol.">
        <title>Nomenclature for members of the expansin superfamily of genes and proteins.</title>
        <authorList>
            <person name="Kende H."/>
            <person name="Bradford K.J."/>
            <person name="Brummell D.A."/>
            <person name="Cho H.-T."/>
            <person name="Cosgrove D.J."/>
            <person name="Fleming A.J."/>
            <person name="Gehring C."/>
            <person name="Lee Y."/>
            <person name="McQueen-Mason S.J."/>
            <person name="Rose J.K.C."/>
            <person name="Voesenek L.A.C."/>
        </authorList>
    </citation>
    <scope>NOMENCLATURE</scope>
</reference>
<feature type="signal peptide" evidence="2">
    <location>
        <begin position="1"/>
        <end position="26"/>
    </location>
</feature>
<feature type="chain" id="PRO_0000252004" description="Expansin-A25">
    <location>
        <begin position="27"/>
        <end position="255"/>
    </location>
</feature>
<feature type="domain" description="Expansin-like EG45" evidence="4">
    <location>
        <begin position="45"/>
        <end position="160"/>
    </location>
</feature>
<feature type="domain" description="Expansin-like CBD" evidence="3">
    <location>
        <begin position="170"/>
        <end position="249"/>
    </location>
</feature>
<name>EXP25_ORYSJ</name>
<evidence type="ECO:0000250" key="1"/>
<evidence type="ECO:0000255" key="2"/>
<evidence type="ECO:0000255" key="3">
    <source>
        <dbReference type="PROSITE-ProRule" id="PRU00078"/>
    </source>
</evidence>
<evidence type="ECO:0000255" key="4">
    <source>
        <dbReference type="PROSITE-ProRule" id="PRU00079"/>
    </source>
</evidence>
<evidence type="ECO:0000269" key="5">
    <source>
    </source>
</evidence>
<evidence type="ECO:0000305" key="6"/>
<proteinExistence type="evidence at transcript level"/>
<protein>
    <recommendedName>
        <fullName>Expansin-A25</fullName>
    </recommendedName>
    <alternativeName>
        <fullName>Alpha-expansin-25</fullName>
    </alternativeName>
    <alternativeName>
        <fullName>OsEXP25</fullName>
    </alternativeName>
    <alternativeName>
        <fullName>OsEXPA25</fullName>
    </alternativeName>
    <alternativeName>
        <fullName>OsaEXPa1.6</fullName>
    </alternativeName>
</protein>
<organism>
    <name type="scientific">Oryza sativa subsp. japonica</name>
    <name type="common">Rice</name>
    <dbReference type="NCBI Taxonomy" id="39947"/>
    <lineage>
        <taxon>Eukaryota</taxon>
        <taxon>Viridiplantae</taxon>
        <taxon>Streptophyta</taxon>
        <taxon>Embryophyta</taxon>
        <taxon>Tracheophyta</taxon>
        <taxon>Spermatophyta</taxon>
        <taxon>Magnoliopsida</taxon>
        <taxon>Liliopsida</taxon>
        <taxon>Poales</taxon>
        <taxon>Poaceae</taxon>
        <taxon>BOP clade</taxon>
        <taxon>Oryzoideae</taxon>
        <taxon>Oryzeae</taxon>
        <taxon>Oryzinae</taxon>
        <taxon>Oryza</taxon>
        <taxon>Oryza sativa</taxon>
    </lineage>
</organism>
<sequence length="255" mass="27087">MEYAILFATSLVITVLAASGFAPAHGWNKGTATFYGGADASGTMGGACGYGNLYTAGYGTNTAALSSVLFNDGWSCGQCYLIMCDAAATPQWCRAGAAVTITATNLCPPNWALPSNSGGWCNPPRPHFDMAEPAWLQIGIYKAGIIPVLYQQVKCWRQGGIRFTMGGFNFFELVLVSNVAGSGSVRSVSVKGGSTGWITLNRNWGANWQCNSGLVGQALSFAVTSTGGQTLYIYNVVPSWWSFGMTFTSNQQFSY</sequence>
<dbReference type="EMBL" id="AF394560">
    <property type="protein sequence ID" value="AAL24496.1"/>
    <property type="molecule type" value="Genomic_DNA"/>
</dbReference>
<dbReference type="EMBL" id="AC105730">
    <property type="protein sequence ID" value="AAM51843.1"/>
    <property type="molecule type" value="Genomic_DNA"/>
</dbReference>
<dbReference type="EMBL" id="DP000009">
    <property type="protein sequence ID" value="ABF94052.1"/>
    <property type="molecule type" value="Genomic_DNA"/>
</dbReference>
<dbReference type="EMBL" id="AP014959">
    <property type="status" value="NOT_ANNOTATED_CDS"/>
    <property type="molecule type" value="Genomic_DNA"/>
</dbReference>
<dbReference type="EMBL" id="DQ061066">
    <property type="protein sequence ID" value="AAY63557.1"/>
    <property type="molecule type" value="mRNA"/>
</dbReference>
<dbReference type="RefSeq" id="XP_015628562.1">
    <property type="nucleotide sequence ID" value="XM_015773076.1"/>
</dbReference>
<dbReference type="SMR" id="Q4PR41"/>
<dbReference type="FunCoup" id="Q4PR41">
    <property type="interactions" value="13"/>
</dbReference>
<dbReference type="STRING" id="39947.Q4PR41"/>
<dbReference type="PaxDb" id="39947-Q4PR41"/>
<dbReference type="HOGENOM" id="CLU_027462_0_1_1"/>
<dbReference type="InParanoid" id="Q4PR41"/>
<dbReference type="OrthoDB" id="597655at2759"/>
<dbReference type="Proteomes" id="UP000000763">
    <property type="component" value="Chromosome 3"/>
</dbReference>
<dbReference type="Proteomes" id="UP000059680">
    <property type="component" value="Chromosome 3"/>
</dbReference>
<dbReference type="GO" id="GO:0005576">
    <property type="term" value="C:extracellular region"/>
    <property type="evidence" value="ECO:0007669"/>
    <property type="project" value="UniProtKB-KW"/>
</dbReference>
<dbReference type="GO" id="GO:0016020">
    <property type="term" value="C:membrane"/>
    <property type="evidence" value="ECO:0007669"/>
    <property type="project" value="UniProtKB-SubCell"/>
</dbReference>
<dbReference type="GO" id="GO:0009828">
    <property type="term" value="P:plant-type cell wall loosening"/>
    <property type="evidence" value="ECO:0000250"/>
    <property type="project" value="UniProtKB"/>
</dbReference>
<dbReference type="CDD" id="cd22274">
    <property type="entry name" value="DPBB_EXPA_N"/>
    <property type="match status" value="1"/>
</dbReference>
<dbReference type="Gene3D" id="2.60.40.760">
    <property type="entry name" value="Expansin, cellulose-binding-like domain"/>
    <property type="match status" value="1"/>
</dbReference>
<dbReference type="Gene3D" id="2.40.40.10">
    <property type="entry name" value="RlpA-like domain"/>
    <property type="match status" value="1"/>
</dbReference>
<dbReference type="InterPro" id="IPR007118">
    <property type="entry name" value="Expan_Lol_pI"/>
</dbReference>
<dbReference type="InterPro" id="IPR002963">
    <property type="entry name" value="Expansin"/>
</dbReference>
<dbReference type="InterPro" id="IPR007112">
    <property type="entry name" value="Expansin/allergen_DPBB_dom"/>
</dbReference>
<dbReference type="InterPro" id="IPR007117">
    <property type="entry name" value="Expansin_CBD"/>
</dbReference>
<dbReference type="InterPro" id="IPR036749">
    <property type="entry name" value="Expansin_CBD_sf"/>
</dbReference>
<dbReference type="InterPro" id="IPR009009">
    <property type="entry name" value="RlpA-like_DPBB"/>
</dbReference>
<dbReference type="InterPro" id="IPR036908">
    <property type="entry name" value="RlpA-like_sf"/>
</dbReference>
<dbReference type="PANTHER" id="PTHR31867">
    <property type="entry name" value="EXPANSIN-A15"/>
    <property type="match status" value="1"/>
</dbReference>
<dbReference type="Pfam" id="PF03330">
    <property type="entry name" value="DPBB_1"/>
    <property type="match status" value="1"/>
</dbReference>
<dbReference type="Pfam" id="PF01357">
    <property type="entry name" value="Expansin_C"/>
    <property type="match status" value="1"/>
</dbReference>
<dbReference type="PRINTS" id="PR01226">
    <property type="entry name" value="EXPANSIN"/>
</dbReference>
<dbReference type="PRINTS" id="PR01225">
    <property type="entry name" value="EXPANSNFAMLY"/>
</dbReference>
<dbReference type="SMART" id="SM00837">
    <property type="entry name" value="DPBB_1"/>
    <property type="match status" value="1"/>
</dbReference>
<dbReference type="SUPFAM" id="SSF50685">
    <property type="entry name" value="Barwin-like endoglucanases"/>
    <property type="match status" value="1"/>
</dbReference>
<dbReference type="SUPFAM" id="SSF49590">
    <property type="entry name" value="PHL pollen allergen"/>
    <property type="match status" value="1"/>
</dbReference>
<dbReference type="PROSITE" id="PS50843">
    <property type="entry name" value="EXPANSIN_CBD"/>
    <property type="match status" value="1"/>
</dbReference>
<dbReference type="PROSITE" id="PS50842">
    <property type="entry name" value="EXPANSIN_EG45"/>
    <property type="match status" value="1"/>
</dbReference>